<proteinExistence type="evidence at protein level"/>
<accession>Q9W3R7</accession>
<evidence type="ECO:0000250" key="1"/>
<evidence type="ECO:0000269" key="2">
    <source>
    </source>
</evidence>
<evidence type="ECO:0000305" key="3"/>
<feature type="chain" id="PRO_0000218998" description="Autophagy protein 5">
    <location>
        <begin position="1"/>
        <end position="269"/>
    </location>
</feature>
<feature type="cross-link" description="Glycyl lysine isopeptide (Lys-Gly) (interchain with G-Cter in ATG12)" evidence="1">
    <location>
        <position position="132"/>
    </location>
</feature>
<gene>
    <name type="primary">Atg5</name>
    <name type="ORF">CG1643</name>
</gene>
<sequence length="269" mass="31468">MAHDREVLRMIWEGQIGICFQADRDEIVGIKPEPFYLMISRLSYLPLVTDKVRKYFSRYISAEHQDGAVWFDFNGTPLRLHYPIGVLYDLLHPEEDSTPWCLTIHFSKFPEDMLVKLNSKELLESHYMSCLKEADVLKHRGLVISAMQKKDHNQLWLGLVNEKFDQFWAVNRRLMEPYGDLESFKNIPLRIYTDDDFTYTQKLISPISVGGQKKSLADLMAELSTPVRRAVGCRTHGIDLHEETQLQWMSEHLSYPDNFLHLSVDYKDV</sequence>
<name>ATG5_DROME</name>
<comment type="function">
    <text evidence="1 2">Involved in autophagic vesicle formation. Conjugation with Atg12, through a ubiquitin-like conjugating system involving Atg7 as an E1-like activating enzyme and Atg10 as an E2-like conjugating enzyme, is essential for its function. The Atg12-Atg5 conjugate acts as an E3-like enzyme which is required for lipidation of Atg8 and its association to the vesicle membranes (By similarity).</text>
</comment>
<comment type="interaction">
    <interactant intactId="EBI-109649">
        <id>Q9W3R7</id>
    </interactant>
    <interactant intactId="EBI-105321">
        <id>Q86BR6</id>
        <label>Atg16</label>
    </interactant>
    <organismsDiffer>false</organismsDiffer>
    <experiments>4</experiments>
</comment>
<comment type="subcellular location">
    <subcellularLocation>
        <location evidence="1">Cytoplasm</location>
    </subcellularLocation>
    <subcellularLocation>
        <location evidence="1">Preautophagosomal structure membrane</location>
        <topology evidence="1">Peripheral membrane protein</topology>
    </subcellularLocation>
</comment>
<comment type="PTM">
    <text evidence="1">Conjugated to Atg12, which is essential for autophagy.</text>
</comment>
<comment type="similarity">
    <text evidence="3">Belongs to the ATG5 family.</text>
</comment>
<protein>
    <recommendedName>
        <fullName>Autophagy protein 5</fullName>
    </recommendedName>
    <alternativeName>
        <fullName>APG5-like</fullName>
    </alternativeName>
</protein>
<organism>
    <name type="scientific">Drosophila melanogaster</name>
    <name type="common">Fruit fly</name>
    <dbReference type="NCBI Taxonomy" id="7227"/>
    <lineage>
        <taxon>Eukaryota</taxon>
        <taxon>Metazoa</taxon>
        <taxon>Ecdysozoa</taxon>
        <taxon>Arthropoda</taxon>
        <taxon>Hexapoda</taxon>
        <taxon>Insecta</taxon>
        <taxon>Pterygota</taxon>
        <taxon>Neoptera</taxon>
        <taxon>Endopterygota</taxon>
        <taxon>Diptera</taxon>
        <taxon>Brachycera</taxon>
        <taxon>Muscomorpha</taxon>
        <taxon>Ephydroidea</taxon>
        <taxon>Drosophilidae</taxon>
        <taxon>Drosophila</taxon>
        <taxon>Sophophora</taxon>
    </lineage>
</organism>
<keyword id="KW-0072">Autophagy</keyword>
<keyword id="KW-0963">Cytoplasm</keyword>
<keyword id="KW-1017">Isopeptide bond</keyword>
<keyword id="KW-0472">Membrane</keyword>
<keyword id="KW-0653">Protein transport</keyword>
<keyword id="KW-1185">Reference proteome</keyword>
<keyword id="KW-0813">Transport</keyword>
<keyword id="KW-0832">Ubl conjugation</keyword>
<reference key="1">
    <citation type="journal article" date="2000" name="Science">
        <title>The genome sequence of Drosophila melanogaster.</title>
        <authorList>
            <person name="Adams M.D."/>
            <person name="Celniker S.E."/>
            <person name="Holt R.A."/>
            <person name="Evans C.A."/>
            <person name="Gocayne J.D."/>
            <person name="Amanatides P.G."/>
            <person name="Scherer S.E."/>
            <person name="Li P.W."/>
            <person name="Hoskins R.A."/>
            <person name="Galle R.F."/>
            <person name="George R.A."/>
            <person name="Lewis S.E."/>
            <person name="Richards S."/>
            <person name="Ashburner M."/>
            <person name="Henderson S.N."/>
            <person name="Sutton G.G."/>
            <person name="Wortman J.R."/>
            <person name="Yandell M.D."/>
            <person name="Zhang Q."/>
            <person name="Chen L.X."/>
            <person name="Brandon R.C."/>
            <person name="Rogers Y.-H.C."/>
            <person name="Blazej R.G."/>
            <person name="Champe M."/>
            <person name="Pfeiffer B.D."/>
            <person name="Wan K.H."/>
            <person name="Doyle C."/>
            <person name="Baxter E.G."/>
            <person name="Helt G."/>
            <person name="Nelson C.R."/>
            <person name="Miklos G.L.G."/>
            <person name="Abril J.F."/>
            <person name="Agbayani A."/>
            <person name="An H.-J."/>
            <person name="Andrews-Pfannkoch C."/>
            <person name="Baldwin D."/>
            <person name="Ballew R.M."/>
            <person name="Basu A."/>
            <person name="Baxendale J."/>
            <person name="Bayraktaroglu L."/>
            <person name="Beasley E.M."/>
            <person name="Beeson K.Y."/>
            <person name="Benos P.V."/>
            <person name="Berman B.P."/>
            <person name="Bhandari D."/>
            <person name="Bolshakov S."/>
            <person name="Borkova D."/>
            <person name="Botchan M.R."/>
            <person name="Bouck J."/>
            <person name="Brokstein P."/>
            <person name="Brottier P."/>
            <person name="Burtis K.C."/>
            <person name="Busam D.A."/>
            <person name="Butler H."/>
            <person name="Cadieu E."/>
            <person name="Center A."/>
            <person name="Chandra I."/>
            <person name="Cherry J.M."/>
            <person name="Cawley S."/>
            <person name="Dahlke C."/>
            <person name="Davenport L.B."/>
            <person name="Davies P."/>
            <person name="de Pablos B."/>
            <person name="Delcher A."/>
            <person name="Deng Z."/>
            <person name="Mays A.D."/>
            <person name="Dew I."/>
            <person name="Dietz S.M."/>
            <person name="Dodson K."/>
            <person name="Doup L.E."/>
            <person name="Downes M."/>
            <person name="Dugan-Rocha S."/>
            <person name="Dunkov B.C."/>
            <person name="Dunn P."/>
            <person name="Durbin K.J."/>
            <person name="Evangelista C.C."/>
            <person name="Ferraz C."/>
            <person name="Ferriera S."/>
            <person name="Fleischmann W."/>
            <person name="Fosler C."/>
            <person name="Gabrielian A.E."/>
            <person name="Garg N.S."/>
            <person name="Gelbart W.M."/>
            <person name="Glasser K."/>
            <person name="Glodek A."/>
            <person name="Gong F."/>
            <person name="Gorrell J.H."/>
            <person name="Gu Z."/>
            <person name="Guan P."/>
            <person name="Harris M."/>
            <person name="Harris N.L."/>
            <person name="Harvey D.A."/>
            <person name="Heiman T.J."/>
            <person name="Hernandez J.R."/>
            <person name="Houck J."/>
            <person name="Hostin D."/>
            <person name="Houston K.A."/>
            <person name="Howland T.J."/>
            <person name="Wei M.-H."/>
            <person name="Ibegwam C."/>
            <person name="Jalali M."/>
            <person name="Kalush F."/>
            <person name="Karpen G.H."/>
            <person name="Ke Z."/>
            <person name="Kennison J.A."/>
            <person name="Ketchum K.A."/>
            <person name="Kimmel B.E."/>
            <person name="Kodira C.D."/>
            <person name="Kraft C.L."/>
            <person name="Kravitz S."/>
            <person name="Kulp D."/>
            <person name="Lai Z."/>
            <person name="Lasko P."/>
            <person name="Lei Y."/>
            <person name="Levitsky A.A."/>
            <person name="Li J.H."/>
            <person name="Li Z."/>
            <person name="Liang Y."/>
            <person name="Lin X."/>
            <person name="Liu X."/>
            <person name="Mattei B."/>
            <person name="McIntosh T.C."/>
            <person name="McLeod M.P."/>
            <person name="McPherson D."/>
            <person name="Merkulov G."/>
            <person name="Milshina N.V."/>
            <person name="Mobarry C."/>
            <person name="Morris J."/>
            <person name="Moshrefi A."/>
            <person name="Mount S.M."/>
            <person name="Moy M."/>
            <person name="Murphy B."/>
            <person name="Murphy L."/>
            <person name="Muzny D.M."/>
            <person name="Nelson D.L."/>
            <person name="Nelson D.R."/>
            <person name="Nelson K.A."/>
            <person name="Nixon K."/>
            <person name="Nusskern D.R."/>
            <person name="Pacleb J.M."/>
            <person name="Palazzolo M."/>
            <person name="Pittman G.S."/>
            <person name="Pan S."/>
            <person name="Pollard J."/>
            <person name="Puri V."/>
            <person name="Reese M.G."/>
            <person name="Reinert K."/>
            <person name="Remington K."/>
            <person name="Saunders R.D.C."/>
            <person name="Scheeler F."/>
            <person name="Shen H."/>
            <person name="Shue B.C."/>
            <person name="Siden-Kiamos I."/>
            <person name="Simpson M."/>
            <person name="Skupski M.P."/>
            <person name="Smith T.J."/>
            <person name="Spier E."/>
            <person name="Spradling A.C."/>
            <person name="Stapleton M."/>
            <person name="Strong R."/>
            <person name="Sun E."/>
            <person name="Svirskas R."/>
            <person name="Tector C."/>
            <person name="Turner R."/>
            <person name="Venter E."/>
            <person name="Wang A.H."/>
            <person name="Wang X."/>
            <person name="Wang Z.-Y."/>
            <person name="Wassarman D.A."/>
            <person name="Weinstock G.M."/>
            <person name="Weissenbach J."/>
            <person name="Williams S.M."/>
            <person name="Woodage T."/>
            <person name="Worley K.C."/>
            <person name="Wu D."/>
            <person name="Yang S."/>
            <person name="Yao Q.A."/>
            <person name="Ye J."/>
            <person name="Yeh R.-F."/>
            <person name="Zaveri J.S."/>
            <person name="Zhan M."/>
            <person name="Zhang G."/>
            <person name="Zhao Q."/>
            <person name="Zheng L."/>
            <person name="Zheng X.H."/>
            <person name="Zhong F.N."/>
            <person name="Zhong W."/>
            <person name="Zhou X."/>
            <person name="Zhu S.C."/>
            <person name="Zhu X."/>
            <person name="Smith H.O."/>
            <person name="Gibbs R.A."/>
            <person name="Myers E.W."/>
            <person name="Rubin G.M."/>
            <person name="Venter J.C."/>
        </authorList>
    </citation>
    <scope>NUCLEOTIDE SEQUENCE [LARGE SCALE GENOMIC DNA]</scope>
    <source>
        <strain>Berkeley</strain>
    </source>
</reference>
<reference key="2">
    <citation type="journal article" date="2002" name="Genome Biol.">
        <title>Annotation of the Drosophila melanogaster euchromatic genome: a systematic review.</title>
        <authorList>
            <person name="Misra S."/>
            <person name="Crosby M.A."/>
            <person name="Mungall C.J."/>
            <person name="Matthews B.B."/>
            <person name="Campbell K.S."/>
            <person name="Hradecky P."/>
            <person name="Huang Y."/>
            <person name="Kaminker J.S."/>
            <person name="Millburn G.H."/>
            <person name="Prochnik S.E."/>
            <person name="Smith C.D."/>
            <person name="Tupy J.L."/>
            <person name="Whitfield E.J."/>
            <person name="Bayraktaroglu L."/>
            <person name="Berman B.P."/>
            <person name="Bettencourt B.R."/>
            <person name="Celniker S.E."/>
            <person name="de Grey A.D.N.J."/>
            <person name="Drysdale R.A."/>
            <person name="Harris N.L."/>
            <person name="Richter J."/>
            <person name="Russo S."/>
            <person name="Schroeder A.J."/>
            <person name="Shu S.Q."/>
            <person name="Stapleton M."/>
            <person name="Yamada C."/>
            <person name="Ashburner M."/>
            <person name="Gelbart W.M."/>
            <person name="Rubin G.M."/>
            <person name="Lewis S.E."/>
        </authorList>
    </citation>
    <scope>GENOME REANNOTATION</scope>
    <source>
        <strain>Berkeley</strain>
    </source>
</reference>
<reference key="3">
    <citation type="journal article" date="2002" name="Genome Biol.">
        <title>A Drosophila full-length cDNA resource.</title>
        <authorList>
            <person name="Stapleton M."/>
            <person name="Carlson J.W."/>
            <person name="Brokstein P."/>
            <person name="Yu C."/>
            <person name="Champe M."/>
            <person name="George R.A."/>
            <person name="Guarin H."/>
            <person name="Kronmiller B."/>
            <person name="Pacleb J.M."/>
            <person name="Park S."/>
            <person name="Wan K.H."/>
            <person name="Rubin G.M."/>
            <person name="Celniker S.E."/>
        </authorList>
    </citation>
    <scope>NUCLEOTIDE SEQUENCE [LARGE SCALE MRNA]</scope>
    <source>
        <strain>Berkeley</strain>
        <tissue>Embryo</tissue>
    </source>
</reference>
<reference key="4">
    <citation type="journal article" date="2004" name="Dev. Cell">
        <title>Role and regulation of starvation-induced autophagy in the Drosophila fat body.</title>
        <authorList>
            <person name="Scott R.C."/>
            <person name="Schuldiner O."/>
            <person name="Neufeld T.P."/>
        </authorList>
    </citation>
    <scope>FUNCTION</scope>
</reference>
<dbReference type="EMBL" id="AE014298">
    <property type="protein sequence ID" value="AAF46252.2"/>
    <property type="molecule type" value="Genomic_DNA"/>
</dbReference>
<dbReference type="EMBL" id="AY069596">
    <property type="protein sequence ID" value="AAL39741.1"/>
    <property type="molecule type" value="mRNA"/>
</dbReference>
<dbReference type="RefSeq" id="NP_572390.1">
    <property type="nucleotide sequence ID" value="NM_132162.4"/>
</dbReference>
<dbReference type="SMR" id="Q9W3R7"/>
<dbReference type="BioGRID" id="58142">
    <property type="interactions" value="29"/>
</dbReference>
<dbReference type="ComplexPortal" id="CPX-2743">
    <property type="entry name" value="ATG12-ATG5-ATG16 complex"/>
</dbReference>
<dbReference type="DIP" id="DIP-20667N"/>
<dbReference type="FunCoup" id="Q9W3R7">
    <property type="interactions" value="2133"/>
</dbReference>
<dbReference type="IntAct" id="Q9W3R7">
    <property type="interactions" value="3"/>
</dbReference>
<dbReference type="STRING" id="7227.FBpp0071023"/>
<dbReference type="PaxDb" id="7227-FBpp0071023"/>
<dbReference type="DNASU" id="31666"/>
<dbReference type="EnsemblMetazoa" id="FBtr0071065">
    <property type="protein sequence ID" value="FBpp0071023"/>
    <property type="gene ID" value="FBgn0029943"/>
</dbReference>
<dbReference type="GeneID" id="31666"/>
<dbReference type="KEGG" id="dme:Dmel_CG1643"/>
<dbReference type="AGR" id="FB:FBgn0029943"/>
<dbReference type="CTD" id="9474"/>
<dbReference type="FlyBase" id="FBgn0029943">
    <property type="gene designation" value="Atg5"/>
</dbReference>
<dbReference type="VEuPathDB" id="VectorBase:FBgn0029943"/>
<dbReference type="eggNOG" id="KOG2976">
    <property type="taxonomic scope" value="Eukaryota"/>
</dbReference>
<dbReference type="GeneTree" id="ENSGT00390000004766"/>
<dbReference type="HOGENOM" id="CLU_051894_1_0_1"/>
<dbReference type="InParanoid" id="Q9W3R7"/>
<dbReference type="OMA" id="SIQKAVW"/>
<dbReference type="OrthoDB" id="272162at2759"/>
<dbReference type="PhylomeDB" id="Q9W3R7"/>
<dbReference type="Reactome" id="R-DME-1632852">
    <property type="pathway name" value="Macroautophagy"/>
</dbReference>
<dbReference type="BioGRID-ORCS" id="31666">
    <property type="hits" value="0 hits in 1 CRISPR screen"/>
</dbReference>
<dbReference type="GenomeRNAi" id="31666"/>
<dbReference type="PRO" id="PR:Q9W3R7"/>
<dbReference type="Proteomes" id="UP000000803">
    <property type="component" value="Chromosome X"/>
</dbReference>
<dbReference type="Bgee" id="FBgn0029943">
    <property type="expression patterns" value="Expressed in dorsal appendage forming follicle cell in ovary and 95 other cell types or tissues"/>
</dbReference>
<dbReference type="GO" id="GO:0034274">
    <property type="term" value="C:Atg12-Atg5-Atg16 complex"/>
    <property type="evidence" value="ECO:0000250"/>
    <property type="project" value="FlyBase"/>
</dbReference>
<dbReference type="GO" id="GO:0005776">
    <property type="term" value="C:autophagosome"/>
    <property type="evidence" value="ECO:0000314"/>
    <property type="project" value="FlyBase"/>
</dbReference>
<dbReference type="GO" id="GO:0005737">
    <property type="term" value="C:cytoplasm"/>
    <property type="evidence" value="ECO:0000250"/>
    <property type="project" value="UniProtKB"/>
</dbReference>
<dbReference type="GO" id="GO:0061908">
    <property type="term" value="C:phagophore"/>
    <property type="evidence" value="ECO:0000318"/>
    <property type="project" value="GO_Central"/>
</dbReference>
<dbReference type="GO" id="GO:0034045">
    <property type="term" value="C:phagophore assembly site membrane"/>
    <property type="evidence" value="ECO:0000318"/>
    <property type="project" value="GO_Central"/>
</dbReference>
<dbReference type="GO" id="GO:0035973">
    <property type="term" value="P:aggrephagy"/>
    <property type="evidence" value="ECO:0000318"/>
    <property type="project" value="GO_Central"/>
</dbReference>
<dbReference type="GO" id="GO:0000045">
    <property type="term" value="P:autophagosome assembly"/>
    <property type="evidence" value="ECO:0000318"/>
    <property type="project" value="GO_Central"/>
</dbReference>
<dbReference type="GO" id="GO:0006914">
    <property type="term" value="P:autophagy"/>
    <property type="evidence" value="ECO:0000250"/>
    <property type="project" value="UniProtKB"/>
</dbReference>
<dbReference type="GO" id="GO:0006995">
    <property type="term" value="P:cellular response to nitrogen starvation"/>
    <property type="evidence" value="ECO:0000318"/>
    <property type="project" value="GO_Central"/>
</dbReference>
<dbReference type="GO" id="GO:0009267">
    <property type="term" value="P:cellular response to starvation"/>
    <property type="evidence" value="ECO:0000315"/>
    <property type="project" value="FlyBase"/>
</dbReference>
<dbReference type="GO" id="GO:0061723">
    <property type="term" value="P:glycophagy"/>
    <property type="evidence" value="ECO:0000315"/>
    <property type="project" value="FlyBase"/>
</dbReference>
<dbReference type="GO" id="GO:0035096">
    <property type="term" value="P:larval midgut cell programmed cell death"/>
    <property type="evidence" value="ECO:0000315"/>
    <property type="project" value="FlyBase"/>
</dbReference>
<dbReference type="GO" id="GO:0016236">
    <property type="term" value="P:macroautophagy"/>
    <property type="evidence" value="ECO:0000315"/>
    <property type="project" value="FlyBase"/>
</dbReference>
<dbReference type="GO" id="GO:0000423">
    <property type="term" value="P:mitophagy"/>
    <property type="evidence" value="ECO:0000318"/>
    <property type="project" value="GO_Central"/>
</dbReference>
<dbReference type="GO" id="GO:0090385">
    <property type="term" value="P:phagosome-lysosome fusion"/>
    <property type="evidence" value="ECO:0000315"/>
    <property type="project" value="FlyBase"/>
</dbReference>
<dbReference type="GO" id="GO:0034727">
    <property type="term" value="P:piecemeal microautophagy of the nucleus"/>
    <property type="evidence" value="ECO:0000318"/>
    <property type="project" value="GO_Central"/>
</dbReference>
<dbReference type="GO" id="GO:0015031">
    <property type="term" value="P:protein transport"/>
    <property type="evidence" value="ECO:0007669"/>
    <property type="project" value="UniProtKB-KW"/>
</dbReference>
<dbReference type="FunFam" id="1.10.246.190:FF:000001">
    <property type="entry name" value="Autophagy related 5"/>
    <property type="match status" value="1"/>
</dbReference>
<dbReference type="FunFam" id="3.10.20.90:FF:000100">
    <property type="entry name" value="Autophagy related 5"/>
    <property type="match status" value="1"/>
</dbReference>
<dbReference type="Gene3D" id="3.10.20.620">
    <property type="match status" value="1"/>
</dbReference>
<dbReference type="Gene3D" id="1.10.246.190">
    <property type="entry name" value="Autophagy protein Apg5, helix rich domain"/>
    <property type="match status" value="1"/>
</dbReference>
<dbReference type="Gene3D" id="3.10.20.90">
    <property type="entry name" value="Phosphatidylinositol 3-kinase Catalytic Subunit, Chain A, domain 1"/>
    <property type="match status" value="1"/>
</dbReference>
<dbReference type="InterPro" id="IPR007239">
    <property type="entry name" value="Atg5"/>
</dbReference>
<dbReference type="InterPro" id="IPR048940">
    <property type="entry name" value="ATG5_HBR"/>
</dbReference>
<dbReference type="InterPro" id="IPR042526">
    <property type="entry name" value="Atg5_HR"/>
</dbReference>
<dbReference type="InterPro" id="IPR048939">
    <property type="entry name" value="ATG5_UblA"/>
</dbReference>
<dbReference type="InterPro" id="IPR042527">
    <property type="entry name" value="Atg5_UblA_dom_sf"/>
</dbReference>
<dbReference type="InterPro" id="IPR048318">
    <property type="entry name" value="ATG5_UblB"/>
</dbReference>
<dbReference type="PANTHER" id="PTHR13040">
    <property type="entry name" value="AUTOPHAGY PROTEIN 5"/>
    <property type="match status" value="1"/>
</dbReference>
<dbReference type="PANTHER" id="PTHR13040:SF2">
    <property type="entry name" value="AUTOPHAGY PROTEIN 5"/>
    <property type="match status" value="1"/>
</dbReference>
<dbReference type="Pfam" id="PF20637">
    <property type="entry name" value="ATG5_HBR"/>
    <property type="match status" value="1"/>
</dbReference>
<dbReference type="Pfam" id="PF20638">
    <property type="entry name" value="ATG5_UblA"/>
    <property type="match status" value="1"/>
</dbReference>
<dbReference type="Pfam" id="PF04106">
    <property type="entry name" value="ATG5_UblB"/>
    <property type="match status" value="1"/>
</dbReference>